<name>RECX_SHEON</name>
<protein>
    <recommendedName>
        <fullName>Regulatory protein RecX</fullName>
    </recommendedName>
</protein>
<feature type="chain" id="PRO_0000162467" description="Regulatory protein RecX">
    <location>
        <begin position="1"/>
        <end position="127"/>
    </location>
</feature>
<accession>P59207</accession>
<gene>
    <name type="primary">recX</name>
    <name type="ordered locus">SO_3429</name>
</gene>
<organism>
    <name type="scientific">Shewanella oneidensis (strain ATCC 700550 / JCM 31522 / CIP 106686 / LMG 19005 / NCIMB 14063 / MR-1)</name>
    <dbReference type="NCBI Taxonomy" id="211586"/>
    <lineage>
        <taxon>Bacteria</taxon>
        <taxon>Pseudomonadati</taxon>
        <taxon>Pseudomonadota</taxon>
        <taxon>Gammaproteobacteria</taxon>
        <taxon>Alteromonadales</taxon>
        <taxon>Shewanellaceae</taxon>
        <taxon>Shewanella</taxon>
    </lineage>
</organism>
<proteinExistence type="inferred from homology"/>
<dbReference type="EMBL" id="AE014299">
    <property type="protein sequence ID" value="AAN56426.1"/>
    <property type="molecule type" value="Genomic_DNA"/>
</dbReference>
<dbReference type="RefSeq" id="NP_718982.1">
    <property type="nucleotide sequence ID" value="NC_004347.2"/>
</dbReference>
<dbReference type="SMR" id="P59207"/>
<dbReference type="STRING" id="211586.SO_3429"/>
<dbReference type="PaxDb" id="211586-SO_3429"/>
<dbReference type="KEGG" id="son:SO_3429"/>
<dbReference type="PATRIC" id="fig|211586.12.peg.3324"/>
<dbReference type="eggNOG" id="COG2137">
    <property type="taxonomic scope" value="Bacteria"/>
</dbReference>
<dbReference type="HOGENOM" id="CLU_066607_3_2_6"/>
<dbReference type="OrthoDB" id="7066780at2"/>
<dbReference type="PhylomeDB" id="P59207"/>
<dbReference type="BioCyc" id="SONE211586:G1GMP-3200-MONOMER"/>
<dbReference type="Proteomes" id="UP000008186">
    <property type="component" value="Chromosome"/>
</dbReference>
<dbReference type="GO" id="GO:0005737">
    <property type="term" value="C:cytoplasm"/>
    <property type="evidence" value="ECO:0007669"/>
    <property type="project" value="UniProtKB-SubCell"/>
</dbReference>
<dbReference type="GO" id="GO:0006282">
    <property type="term" value="P:regulation of DNA repair"/>
    <property type="evidence" value="ECO:0007669"/>
    <property type="project" value="InterPro"/>
</dbReference>
<dbReference type="Gene3D" id="1.10.10.10">
    <property type="entry name" value="Winged helix-like DNA-binding domain superfamily/Winged helix DNA-binding domain"/>
    <property type="match status" value="2"/>
</dbReference>
<dbReference type="InterPro" id="IPR053924">
    <property type="entry name" value="RecX_HTH_2nd"/>
</dbReference>
<dbReference type="InterPro" id="IPR003783">
    <property type="entry name" value="Regulatory_RecX"/>
</dbReference>
<dbReference type="InterPro" id="IPR036388">
    <property type="entry name" value="WH-like_DNA-bd_sf"/>
</dbReference>
<dbReference type="PANTHER" id="PTHR33602">
    <property type="entry name" value="REGULATORY PROTEIN RECX FAMILY PROTEIN"/>
    <property type="match status" value="1"/>
</dbReference>
<dbReference type="PANTHER" id="PTHR33602:SF1">
    <property type="entry name" value="REGULATORY PROTEIN RECX FAMILY PROTEIN"/>
    <property type="match status" value="1"/>
</dbReference>
<dbReference type="Pfam" id="PF02631">
    <property type="entry name" value="RecX_HTH2"/>
    <property type="match status" value="1"/>
</dbReference>
<keyword id="KW-0963">Cytoplasm</keyword>
<keyword id="KW-1185">Reference proteome</keyword>
<reference key="1">
    <citation type="journal article" date="2002" name="Nat. Biotechnol.">
        <title>Genome sequence of the dissimilatory metal ion-reducing bacterium Shewanella oneidensis.</title>
        <authorList>
            <person name="Heidelberg J.F."/>
            <person name="Paulsen I.T."/>
            <person name="Nelson K.E."/>
            <person name="Gaidos E.J."/>
            <person name="Nelson W.C."/>
            <person name="Read T.D."/>
            <person name="Eisen J.A."/>
            <person name="Seshadri R."/>
            <person name="Ward N.L."/>
            <person name="Methe B.A."/>
            <person name="Clayton R.A."/>
            <person name="Meyer T."/>
            <person name="Tsapin A."/>
            <person name="Scott J."/>
            <person name="Beanan M.J."/>
            <person name="Brinkac L.M."/>
            <person name="Daugherty S.C."/>
            <person name="DeBoy R.T."/>
            <person name="Dodson R.J."/>
            <person name="Durkin A.S."/>
            <person name="Haft D.H."/>
            <person name="Kolonay J.F."/>
            <person name="Madupu R."/>
            <person name="Peterson J.D."/>
            <person name="Umayam L.A."/>
            <person name="White O."/>
            <person name="Wolf A.M."/>
            <person name="Vamathevan J.J."/>
            <person name="Weidman J.F."/>
            <person name="Impraim M."/>
            <person name="Lee K."/>
            <person name="Berry K.J."/>
            <person name="Lee C."/>
            <person name="Mueller J."/>
            <person name="Khouri H.M."/>
            <person name="Gill J."/>
            <person name="Utterback T.R."/>
            <person name="McDonald L.A."/>
            <person name="Feldblyum T.V."/>
            <person name="Smith H.O."/>
            <person name="Venter J.C."/>
            <person name="Nealson K.H."/>
            <person name="Fraser C.M."/>
        </authorList>
    </citation>
    <scope>NUCLEOTIDE SEQUENCE [LARGE SCALE GENOMIC DNA]</scope>
    <source>
        <strain>ATCC 700550 / JCM 31522 / CIP 106686 / LMG 19005 / NCIMB 14063 / MR-1</strain>
    </source>
</reference>
<comment type="function">
    <text evidence="1">Modulates RecA activity.</text>
</comment>
<comment type="subcellular location">
    <subcellularLocation>
        <location evidence="2">Cytoplasm</location>
    </subcellularLocation>
</comment>
<comment type="similarity">
    <text evidence="2">Belongs to the RecX family.</text>
</comment>
<evidence type="ECO:0000250" key="1"/>
<evidence type="ECO:0000305" key="2"/>
<sequence>MLDDCEASGFINDKRYAELLVRSNIARGHGPIRIRQAIAQKGLTKDCIEAALIATDYDWFELAKAKAKAKAIKKYGVPKVTEVKGSQSRELIAKEKAKRVRFLLSQGFSYEQVIYALDYDPLEDNDD</sequence>